<reference key="1">
    <citation type="journal article" date="2002" name="Nature">
        <title>The genome sequence of Schizosaccharomyces pombe.</title>
        <authorList>
            <person name="Wood V."/>
            <person name="Gwilliam R."/>
            <person name="Rajandream M.A."/>
            <person name="Lyne M.H."/>
            <person name="Lyne R."/>
            <person name="Stewart A."/>
            <person name="Sgouros J.G."/>
            <person name="Peat N."/>
            <person name="Hayles J."/>
            <person name="Baker S.G."/>
            <person name="Basham D."/>
            <person name="Bowman S."/>
            <person name="Brooks K."/>
            <person name="Brown D."/>
            <person name="Brown S."/>
            <person name="Chillingworth T."/>
            <person name="Churcher C.M."/>
            <person name="Collins M."/>
            <person name="Connor R."/>
            <person name="Cronin A."/>
            <person name="Davis P."/>
            <person name="Feltwell T."/>
            <person name="Fraser A."/>
            <person name="Gentles S."/>
            <person name="Goble A."/>
            <person name="Hamlin N."/>
            <person name="Harris D.E."/>
            <person name="Hidalgo J."/>
            <person name="Hodgson G."/>
            <person name="Holroyd S."/>
            <person name="Hornsby T."/>
            <person name="Howarth S."/>
            <person name="Huckle E.J."/>
            <person name="Hunt S."/>
            <person name="Jagels K."/>
            <person name="James K.D."/>
            <person name="Jones L."/>
            <person name="Jones M."/>
            <person name="Leather S."/>
            <person name="McDonald S."/>
            <person name="McLean J."/>
            <person name="Mooney P."/>
            <person name="Moule S."/>
            <person name="Mungall K.L."/>
            <person name="Murphy L.D."/>
            <person name="Niblett D."/>
            <person name="Odell C."/>
            <person name="Oliver K."/>
            <person name="O'Neil S."/>
            <person name="Pearson D."/>
            <person name="Quail M.A."/>
            <person name="Rabbinowitsch E."/>
            <person name="Rutherford K.M."/>
            <person name="Rutter S."/>
            <person name="Saunders D."/>
            <person name="Seeger K."/>
            <person name="Sharp S."/>
            <person name="Skelton J."/>
            <person name="Simmonds M.N."/>
            <person name="Squares R."/>
            <person name="Squares S."/>
            <person name="Stevens K."/>
            <person name="Taylor K."/>
            <person name="Taylor R.G."/>
            <person name="Tivey A."/>
            <person name="Walsh S.V."/>
            <person name="Warren T."/>
            <person name="Whitehead S."/>
            <person name="Woodward J.R."/>
            <person name="Volckaert G."/>
            <person name="Aert R."/>
            <person name="Robben J."/>
            <person name="Grymonprez B."/>
            <person name="Weltjens I."/>
            <person name="Vanstreels E."/>
            <person name="Rieger M."/>
            <person name="Schaefer M."/>
            <person name="Mueller-Auer S."/>
            <person name="Gabel C."/>
            <person name="Fuchs M."/>
            <person name="Duesterhoeft A."/>
            <person name="Fritzc C."/>
            <person name="Holzer E."/>
            <person name="Moestl D."/>
            <person name="Hilbert H."/>
            <person name="Borzym K."/>
            <person name="Langer I."/>
            <person name="Beck A."/>
            <person name="Lehrach H."/>
            <person name="Reinhardt R."/>
            <person name="Pohl T.M."/>
            <person name="Eger P."/>
            <person name="Zimmermann W."/>
            <person name="Wedler H."/>
            <person name="Wambutt R."/>
            <person name="Purnelle B."/>
            <person name="Goffeau A."/>
            <person name="Cadieu E."/>
            <person name="Dreano S."/>
            <person name="Gloux S."/>
            <person name="Lelaure V."/>
            <person name="Mottier S."/>
            <person name="Galibert F."/>
            <person name="Aves S.J."/>
            <person name="Xiang Z."/>
            <person name="Hunt C."/>
            <person name="Moore K."/>
            <person name="Hurst S.M."/>
            <person name="Lucas M."/>
            <person name="Rochet M."/>
            <person name="Gaillardin C."/>
            <person name="Tallada V.A."/>
            <person name="Garzon A."/>
            <person name="Thode G."/>
            <person name="Daga R.R."/>
            <person name="Cruzado L."/>
            <person name="Jimenez J."/>
            <person name="Sanchez M."/>
            <person name="del Rey F."/>
            <person name="Benito J."/>
            <person name="Dominguez A."/>
            <person name="Revuelta J.L."/>
            <person name="Moreno S."/>
            <person name="Armstrong J."/>
            <person name="Forsburg S.L."/>
            <person name="Cerutti L."/>
            <person name="Lowe T."/>
            <person name="McCombie W.R."/>
            <person name="Paulsen I."/>
            <person name="Potashkin J."/>
            <person name="Shpakovski G.V."/>
            <person name="Ussery D."/>
            <person name="Barrell B.G."/>
            <person name="Nurse P."/>
        </authorList>
    </citation>
    <scope>NUCLEOTIDE SEQUENCE [LARGE SCALE GENOMIC DNA]</scope>
    <source>
        <strain>972 / ATCC 24843</strain>
    </source>
</reference>
<reference key="2">
    <citation type="journal article" date="2006" name="Nat. Biotechnol.">
        <title>ORFeome cloning and global analysis of protein localization in the fission yeast Schizosaccharomyces pombe.</title>
        <authorList>
            <person name="Matsuyama A."/>
            <person name="Arai R."/>
            <person name="Yashiroda Y."/>
            <person name="Shirai A."/>
            <person name="Kamata A."/>
            <person name="Sekido S."/>
            <person name="Kobayashi Y."/>
            <person name="Hashimoto A."/>
            <person name="Hamamoto M."/>
            <person name="Hiraoka Y."/>
            <person name="Horinouchi S."/>
            <person name="Yoshida M."/>
        </authorList>
    </citation>
    <scope>SUBCELLULAR LOCATION [LARGE SCALE ANALYSIS]</scope>
</reference>
<evidence type="ECO:0000250" key="1"/>
<evidence type="ECO:0000269" key="2">
    <source>
    </source>
</evidence>
<evidence type="ECO:0000305" key="3"/>
<proteinExistence type="inferred from homology"/>
<protein>
    <recommendedName>
        <fullName>Peroxisomal biogenesis factor 11</fullName>
    </recommendedName>
</protein>
<feature type="chain" id="PRO_0000116518" description="Peroxisomal biogenesis factor 11">
    <location>
        <begin position="1"/>
        <end position="238"/>
    </location>
</feature>
<keyword id="KW-0472">Membrane</keyword>
<keyword id="KW-0496">Mitochondrion</keyword>
<keyword id="KW-0576">Peroxisome</keyword>
<keyword id="KW-0962">Peroxisome biogenesis</keyword>
<keyword id="KW-1185">Reference proteome</keyword>
<comment type="function">
    <text evidence="1">Involved in peroxisomal proliferation. Promotes peroxisome division and biogenesis (By similarity).</text>
</comment>
<comment type="subcellular location">
    <subcellularLocation>
        <location evidence="2">Mitochondrion</location>
    </subcellularLocation>
    <subcellularLocation>
        <location evidence="1">Peroxisome membrane</location>
        <topology evidence="1">Peripheral membrane protein</topology>
    </subcellularLocation>
</comment>
<comment type="similarity">
    <text evidence="3">Belongs to the peroxin-11 family.</text>
</comment>
<accession>Q10333</accession>
<dbReference type="EMBL" id="CU329671">
    <property type="protein sequence ID" value="CAB46672.1"/>
    <property type="molecule type" value="Genomic_DNA"/>
</dbReference>
<dbReference type="PIR" id="T40568">
    <property type="entry name" value="T40568"/>
</dbReference>
<dbReference type="RefSeq" id="NP_595177.1">
    <property type="nucleotide sequence ID" value="NM_001021085.2"/>
</dbReference>
<dbReference type="SMR" id="Q10333"/>
<dbReference type="BioGRID" id="277629">
    <property type="interactions" value="18"/>
</dbReference>
<dbReference type="FunCoup" id="Q10333">
    <property type="interactions" value="47"/>
</dbReference>
<dbReference type="STRING" id="284812.Q10333"/>
<dbReference type="iPTMnet" id="Q10333"/>
<dbReference type="PaxDb" id="4896-SPBC582.09.1"/>
<dbReference type="EnsemblFungi" id="SPBC582.09.1">
    <property type="protein sequence ID" value="SPBC582.09.1:pep"/>
    <property type="gene ID" value="SPBC582.09"/>
</dbReference>
<dbReference type="GeneID" id="2541114"/>
<dbReference type="KEGG" id="spo:2541114"/>
<dbReference type="PomBase" id="SPBC582.09">
    <property type="gene designation" value="pex11"/>
</dbReference>
<dbReference type="VEuPathDB" id="FungiDB:SPBC582.09"/>
<dbReference type="eggNOG" id="KOG4186">
    <property type="taxonomic scope" value="Eukaryota"/>
</dbReference>
<dbReference type="HOGENOM" id="CLU_049216_2_1_1"/>
<dbReference type="InParanoid" id="Q10333"/>
<dbReference type="OMA" id="KCTPGTI"/>
<dbReference type="PhylomeDB" id="Q10333"/>
<dbReference type="Reactome" id="R-SPO-9603798">
    <property type="pathway name" value="Class I peroxisomal membrane protein import"/>
</dbReference>
<dbReference type="PRO" id="PR:Q10333"/>
<dbReference type="Proteomes" id="UP000002485">
    <property type="component" value="Chromosome II"/>
</dbReference>
<dbReference type="GO" id="GO:0005739">
    <property type="term" value="C:mitochondrion"/>
    <property type="evidence" value="ECO:0007005"/>
    <property type="project" value="PomBase"/>
</dbReference>
<dbReference type="GO" id="GO:0005778">
    <property type="term" value="C:peroxisomal membrane"/>
    <property type="evidence" value="ECO:0000318"/>
    <property type="project" value="GO_Central"/>
</dbReference>
<dbReference type="GO" id="GO:0016559">
    <property type="term" value="P:peroxisome fission"/>
    <property type="evidence" value="ECO:0000318"/>
    <property type="project" value="GO_Central"/>
</dbReference>
<dbReference type="InterPro" id="IPR008733">
    <property type="entry name" value="PEX11"/>
</dbReference>
<dbReference type="PANTHER" id="PTHR12652:SF50">
    <property type="entry name" value="PEROXIN 11"/>
    <property type="match status" value="1"/>
</dbReference>
<dbReference type="PANTHER" id="PTHR12652">
    <property type="entry name" value="PEROXISOMAL BIOGENESIS FACTOR 11"/>
    <property type="match status" value="1"/>
</dbReference>
<dbReference type="Pfam" id="PF05648">
    <property type="entry name" value="PEX11"/>
    <property type="match status" value="1"/>
</dbReference>
<name>PEX11_SCHPO</name>
<gene>
    <name type="primary">pex11</name>
    <name type="ORF">SPBC582.09</name>
</gene>
<organism>
    <name type="scientific">Schizosaccharomyces pombe (strain 972 / ATCC 24843)</name>
    <name type="common">Fission yeast</name>
    <dbReference type="NCBI Taxonomy" id="284812"/>
    <lineage>
        <taxon>Eukaryota</taxon>
        <taxon>Fungi</taxon>
        <taxon>Dikarya</taxon>
        <taxon>Ascomycota</taxon>
        <taxon>Taphrinomycotina</taxon>
        <taxon>Schizosaccharomycetes</taxon>
        <taxon>Schizosaccharomycetales</taxon>
        <taxon>Schizosaccharomycetaceae</taxon>
        <taxon>Schizosaccharomyces</taxon>
    </lineage>
</organism>
<sequence length="238" mass="26479">MAVIFENPQYVHVLRMLNSMPARDKTFRALQFVAKLLSWHLFYGGSSLSTVNKWKKLESNISFSRKLFSIGKVLDYICKVYFDSLKLQNPLSGNKSALPTISFTKDVAFAGYATAELIGWFNKTELMPCSHSKQISTIGKQCLAVALLSSCLAGCYELQQNSKKIKSATQEASEKDSTSLQTLQKERKEILFFALQNALDATIPLAELDILKVNDGFVAAAGITTSLMSVYKTWIGSY</sequence>